<reference key="1">
    <citation type="journal article" date="2004" name="Nature">
        <title>Sequence and comparative analysis of the chicken genome provide unique perspectives on vertebrate evolution.</title>
        <authorList>
            <person name="Hillier L.W."/>
            <person name="Miller W."/>
            <person name="Birney E."/>
            <person name="Warren W."/>
            <person name="Hardison R.C."/>
            <person name="Ponting C.P."/>
            <person name="Bork P."/>
            <person name="Burt D.W."/>
            <person name="Groenen M.A.M."/>
            <person name="Delany M.E."/>
            <person name="Dodgson J.B."/>
            <person name="Chinwalla A.T."/>
            <person name="Cliften P.F."/>
            <person name="Clifton S.W."/>
            <person name="Delehaunty K.D."/>
            <person name="Fronick C."/>
            <person name="Fulton R.S."/>
            <person name="Graves T.A."/>
            <person name="Kremitzki C."/>
            <person name="Layman D."/>
            <person name="Magrini V."/>
            <person name="McPherson J.D."/>
            <person name="Miner T.L."/>
            <person name="Minx P."/>
            <person name="Nash W.E."/>
            <person name="Nhan M.N."/>
            <person name="Nelson J.O."/>
            <person name="Oddy L.G."/>
            <person name="Pohl C.S."/>
            <person name="Randall-Maher J."/>
            <person name="Smith S.M."/>
            <person name="Wallis J.W."/>
            <person name="Yang S.-P."/>
            <person name="Romanov M.N."/>
            <person name="Rondelli C.M."/>
            <person name="Paton B."/>
            <person name="Smith J."/>
            <person name="Morrice D."/>
            <person name="Daniels L."/>
            <person name="Tempest H.G."/>
            <person name="Robertson L."/>
            <person name="Masabanda J.S."/>
            <person name="Griffin D.K."/>
            <person name="Vignal A."/>
            <person name="Fillon V."/>
            <person name="Jacobbson L."/>
            <person name="Kerje S."/>
            <person name="Andersson L."/>
            <person name="Crooijmans R.P."/>
            <person name="Aerts J."/>
            <person name="van der Poel J.J."/>
            <person name="Ellegren H."/>
            <person name="Caldwell R.B."/>
            <person name="Hubbard S.J."/>
            <person name="Grafham D.V."/>
            <person name="Kierzek A.M."/>
            <person name="McLaren S.R."/>
            <person name="Overton I.M."/>
            <person name="Arakawa H."/>
            <person name="Beattie K.J."/>
            <person name="Bezzubov Y."/>
            <person name="Boardman P.E."/>
            <person name="Bonfield J.K."/>
            <person name="Croning M.D.R."/>
            <person name="Davies R.M."/>
            <person name="Francis M.D."/>
            <person name="Humphray S.J."/>
            <person name="Scott C.E."/>
            <person name="Taylor R.G."/>
            <person name="Tickle C."/>
            <person name="Brown W.R.A."/>
            <person name="Rogers J."/>
            <person name="Buerstedde J.-M."/>
            <person name="Wilson S.A."/>
            <person name="Stubbs L."/>
            <person name="Ovcharenko I."/>
            <person name="Gordon L."/>
            <person name="Lucas S."/>
            <person name="Miller M.M."/>
            <person name="Inoko H."/>
            <person name="Shiina T."/>
            <person name="Kaufman J."/>
            <person name="Salomonsen J."/>
            <person name="Skjoedt K."/>
            <person name="Wong G.K.-S."/>
            <person name="Wang J."/>
            <person name="Liu B."/>
            <person name="Wang J."/>
            <person name="Yu J."/>
            <person name="Yang H."/>
            <person name="Nefedov M."/>
            <person name="Koriabine M."/>
            <person name="Dejong P.J."/>
            <person name="Goodstadt L."/>
            <person name="Webber C."/>
            <person name="Dickens N.J."/>
            <person name="Letunic I."/>
            <person name="Suyama M."/>
            <person name="Torrents D."/>
            <person name="von Mering C."/>
            <person name="Zdobnov E.M."/>
            <person name="Makova K."/>
            <person name="Nekrutenko A."/>
            <person name="Elnitski L."/>
            <person name="Eswara P."/>
            <person name="King D.C."/>
            <person name="Yang S.-P."/>
            <person name="Tyekucheva S."/>
            <person name="Radakrishnan A."/>
            <person name="Harris R.S."/>
            <person name="Chiaromonte F."/>
            <person name="Taylor J."/>
            <person name="He J."/>
            <person name="Rijnkels M."/>
            <person name="Griffiths-Jones S."/>
            <person name="Ureta-Vidal A."/>
            <person name="Hoffman M.M."/>
            <person name="Severin J."/>
            <person name="Searle S.M.J."/>
            <person name="Law A.S."/>
            <person name="Speed D."/>
            <person name="Waddington D."/>
            <person name="Cheng Z."/>
            <person name="Tuzun E."/>
            <person name="Eichler E."/>
            <person name="Bao Z."/>
            <person name="Flicek P."/>
            <person name="Shteynberg D.D."/>
            <person name="Brent M.R."/>
            <person name="Bye J.M."/>
            <person name="Huckle E.J."/>
            <person name="Chatterji S."/>
            <person name="Dewey C."/>
            <person name="Pachter L."/>
            <person name="Kouranov A."/>
            <person name="Mourelatos Z."/>
            <person name="Hatzigeorgiou A.G."/>
            <person name="Paterson A.H."/>
            <person name="Ivarie R."/>
            <person name="Brandstrom M."/>
            <person name="Axelsson E."/>
            <person name="Backstrom N."/>
            <person name="Berlin S."/>
            <person name="Webster M.T."/>
            <person name="Pourquie O."/>
            <person name="Reymond A."/>
            <person name="Ucla C."/>
            <person name="Antonarakis S.E."/>
            <person name="Long M."/>
            <person name="Emerson J.J."/>
            <person name="Betran E."/>
            <person name="Dupanloup I."/>
            <person name="Kaessmann H."/>
            <person name="Hinrichs A.S."/>
            <person name="Bejerano G."/>
            <person name="Furey T.S."/>
            <person name="Harte R.A."/>
            <person name="Raney B."/>
            <person name="Siepel A."/>
            <person name="Kent W.J."/>
            <person name="Haussler D."/>
            <person name="Eyras E."/>
            <person name="Castelo R."/>
            <person name="Abril J.F."/>
            <person name="Castellano S."/>
            <person name="Camara F."/>
            <person name="Parra G."/>
            <person name="Guigo R."/>
            <person name="Bourque G."/>
            <person name="Tesler G."/>
            <person name="Pevzner P.A."/>
            <person name="Smit A."/>
            <person name="Fulton L.A."/>
            <person name="Mardis E.R."/>
            <person name="Wilson R.K."/>
        </authorList>
    </citation>
    <scope>NUCLEOTIDE SEQUENCE [LARGE SCALE GENOMIC DNA]</scope>
</reference>
<dbReference type="EC" id="2.7.11.1" evidence="2"/>
<dbReference type="EMBL" id="AADN02000550">
    <property type="status" value="NOT_ANNOTATED_CDS"/>
    <property type="molecule type" value="Genomic_DNA"/>
</dbReference>
<dbReference type="SMR" id="E1C2I2"/>
<dbReference type="FunCoup" id="E1C2I2">
    <property type="interactions" value="1059"/>
</dbReference>
<dbReference type="STRING" id="9031.ENSGALP00000012119"/>
<dbReference type="PaxDb" id="9031-ENSGALP00000012119"/>
<dbReference type="VEuPathDB" id="HostDB:geneid_420487"/>
<dbReference type="eggNOG" id="KOG0606">
    <property type="taxonomic scope" value="Eukaryota"/>
</dbReference>
<dbReference type="HOGENOM" id="CLU_016048_0_0_1"/>
<dbReference type="InParanoid" id="E1C2I2"/>
<dbReference type="OrthoDB" id="162894at2759"/>
<dbReference type="PhylomeDB" id="E1C2I2"/>
<dbReference type="TreeFam" id="TF313149"/>
<dbReference type="Proteomes" id="UP000000539">
    <property type="component" value="Unassembled WGS sequence"/>
</dbReference>
<dbReference type="GO" id="GO:0005813">
    <property type="term" value="C:centrosome"/>
    <property type="evidence" value="ECO:0000250"/>
    <property type="project" value="UniProtKB"/>
</dbReference>
<dbReference type="GO" id="GO:0032154">
    <property type="term" value="C:cleavage furrow"/>
    <property type="evidence" value="ECO:0000250"/>
    <property type="project" value="UniProtKB"/>
</dbReference>
<dbReference type="GO" id="GO:0005737">
    <property type="term" value="C:cytoplasm"/>
    <property type="evidence" value="ECO:0007669"/>
    <property type="project" value="UniProtKB-KW"/>
</dbReference>
<dbReference type="GO" id="GO:0005634">
    <property type="term" value="C:nucleus"/>
    <property type="evidence" value="ECO:0000250"/>
    <property type="project" value="UniProtKB"/>
</dbReference>
<dbReference type="GO" id="GO:0005524">
    <property type="term" value="F:ATP binding"/>
    <property type="evidence" value="ECO:0007669"/>
    <property type="project" value="UniProtKB-KW"/>
</dbReference>
<dbReference type="GO" id="GO:0051721">
    <property type="term" value="F:protein phosphatase 2A binding"/>
    <property type="evidence" value="ECO:0000250"/>
    <property type="project" value="UniProtKB"/>
</dbReference>
<dbReference type="GO" id="GO:0106310">
    <property type="term" value="F:protein serine kinase activity"/>
    <property type="evidence" value="ECO:0007669"/>
    <property type="project" value="RHEA"/>
</dbReference>
<dbReference type="GO" id="GO:0004674">
    <property type="term" value="F:protein serine/threonine kinase activity"/>
    <property type="evidence" value="ECO:0000250"/>
    <property type="project" value="UniProtKB"/>
</dbReference>
<dbReference type="GO" id="GO:0051301">
    <property type="term" value="P:cell division"/>
    <property type="evidence" value="ECO:0007669"/>
    <property type="project" value="UniProtKB-KW"/>
</dbReference>
<dbReference type="GO" id="GO:0006974">
    <property type="term" value="P:DNA damage response"/>
    <property type="evidence" value="ECO:0000250"/>
    <property type="project" value="UniProtKB"/>
</dbReference>
<dbReference type="GO" id="GO:0000086">
    <property type="term" value="P:G2/M transition of mitotic cell cycle"/>
    <property type="evidence" value="ECO:0000250"/>
    <property type="project" value="UniProtKB"/>
</dbReference>
<dbReference type="GO" id="GO:0035556">
    <property type="term" value="P:intracellular signal transduction"/>
    <property type="evidence" value="ECO:0000318"/>
    <property type="project" value="GO_Central"/>
</dbReference>
<dbReference type="GO" id="GO:0000278">
    <property type="term" value="P:mitotic cell cycle"/>
    <property type="evidence" value="ECO:0000250"/>
    <property type="project" value="UniProtKB"/>
</dbReference>
<dbReference type="FunFam" id="1.10.510.10:FF:000278">
    <property type="entry name" value="serine/threonine-protein kinase greatwall isoform X1"/>
    <property type="match status" value="1"/>
</dbReference>
<dbReference type="FunFam" id="3.30.200.20:FF:000277">
    <property type="entry name" value="serine/threonine-protein kinase greatwall isoform X1"/>
    <property type="match status" value="1"/>
</dbReference>
<dbReference type="FunFam" id="1.10.510.10:FF:000484">
    <property type="entry name" value="Serine/threonine-protein kinase greatwall, putative"/>
    <property type="match status" value="1"/>
</dbReference>
<dbReference type="Gene3D" id="3.30.200.20">
    <property type="entry name" value="Phosphorylase Kinase, domain 1"/>
    <property type="match status" value="2"/>
</dbReference>
<dbReference type="Gene3D" id="1.10.510.10">
    <property type="entry name" value="Transferase(Phosphotransferase) domain 1"/>
    <property type="match status" value="2"/>
</dbReference>
<dbReference type="InterPro" id="IPR000961">
    <property type="entry name" value="AGC-kinase_C"/>
</dbReference>
<dbReference type="InterPro" id="IPR011009">
    <property type="entry name" value="Kinase-like_dom_sf"/>
</dbReference>
<dbReference type="InterPro" id="IPR000719">
    <property type="entry name" value="Prot_kinase_dom"/>
</dbReference>
<dbReference type="InterPro" id="IPR008271">
    <property type="entry name" value="Ser/Thr_kinase_AS"/>
</dbReference>
<dbReference type="InterPro" id="IPR050236">
    <property type="entry name" value="Ser_Thr_kinase_AGC"/>
</dbReference>
<dbReference type="PANTHER" id="PTHR24356">
    <property type="entry name" value="SERINE/THREONINE-PROTEIN KINASE"/>
    <property type="match status" value="1"/>
</dbReference>
<dbReference type="PANTHER" id="PTHR24356:SF1">
    <property type="entry name" value="SERINE_THREONINE-PROTEIN KINASE GREATWALL"/>
    <property type="match status" value="1"/>
</dbReference>
<dbReference type="Pfam" id="PF00069">
    <property type="entry name" value="Pkinase"/>
    <property type="match status" value="2"/>
</dbReference>
<dbReference type="SMART" id="SM00220">
    <property type="entry name" value="S_TKc"/>
    <property type="match status" value="1"/>
</dbReference>
<dbReference type="SUPFAM" id="SSF56112">
    <property type="entry name" value="Protein kinase-like (PK-like)"/>
    <property type="match status" value="1"/>
</dbReference>
<dbReference type="PROSITE" id="PS51285">
    <property type="entry name" value="AGC_KINASE_CTER"/>
    <property type="match status" value="1"/>
</dbReference>
<dbReference type="PROSITE" id="PS50011">
    <property type="entry name" value="PROTEIN_KINASE_DOM"/>
    <property type="match status" value="1"/>
</dbReference>
<dbReference type="PROSITE" id="PS00108">
    <property type="entry name" value="PROTEIN_KINASE_ST"/>
    <property type="match status" value="1"/>
</dbReference>
<name>GWL_CHICK</name>
<proteinExistence type="inferred from homology"/>
<organism>
    <name type="scientific">Gallus gallus</name>
    <name type="common">Chicken</name>
    <dbReference type="NCBI Taxonomy" id="9031"/>
    <lineage>
        <taxon>Eukaryota</taxon>
        <taxon>Metazoa</taxon>
        <taxon>Chordata</taxon>
        <taxon>Craniata</taxon>
        <taxon>Vertebrata</taxon>
        <taxon>Euteleostomi</taxon>
        <taxon>Archelosauria</taxon>
        <taxon>Archosauria</taxon>
        <taxon>Dinosauria</taxon>
        <taxon>Saurischia</taxon>
        <taxon>Theropoda</taxon>
        <taxon>Coelurosauria</taxon>
        <taxon>Aves</taxon>
        <taxon>Neognathae</taxon>
        <taxon>Galloanserae</taxon>
        <taxon>Galliformes</taxon>
        <taxon>Phasianidae</taxon>
        <taxon>Phasianinae</taxon>
        <taxon>Gallus</taxon>
    </lineage>
</organism>
<keyword id="KW-0067">ATP-binding</keyword>
<keyword id="KW-0131">Cell cycle</keyword>
<keyword id="KW-0132">Cell division</keyword>
<keyword id="KW-0963">Cytoplasm</keyword>
<keyword id="KW-0206">Cytoskeleton</keyword>
<keyword id="KW-0418">Kinase</keyword>
<keyword id="KW-0498">Mitosis</keyword>
<keyword id="KW-0547">Nucleotide-binding</keyword>
<keyword id="KW-0539">Nucleus</keyword>
<keyword id="KW-0597">Phosphoprotein</keyword>
<keyword id="KW-1185">Reference proteome</keyword>
<keyword id="KW-0723">Serine/threonine-protein kinase</keyword>
<keyword id="KW-0808">Transferase</keyword>
<comment type="function">
    <text evidence="2">Serine/threonine kinase that plays a key role in M phase by acting as a regulator of mitosis entry and maintenance (By similarity). Acts by promoting the inactivation of protein phosphatase 2A (PP2A) during M phase: does not directly inhibit PP2A but acts by mediating phosphorylation and subsequent activation of ARPP19 and ENSA at 'Ser-62' and 'Ser-67', respectively (By similarity). ARPP19 and ENSA are phosphatase inhibitors that specifically inhibit the PPP2R2D (PR55-delta) subunit of PP2A. Inactivation of PP2A during M phase is essential to keep cyclin-B1-CDK1 activity high (By similarity). Following DNA damage, it is also involved in checkpoint recovery by being inhibited.</text>
</comment>
<comment type="catalytic activity">
    <reaction evidence="2">
        <text>L-seryl-[protein] + ATP = O-phospho-L-seryl-[protein] + ADP + H(+)</text>
        <dbReference type="Rhea" id="RHEA:17989"/>
        <dbReference type="Rhea" id="RHEA-COMP:9863"/>
        <dbReference type="Rhea" id="RHEA-COMP:11604"/>
        <dbReference type="ChEBI" id="CHEBI:15378"/>
        <dbReference type="ChEBI" id="CHEBI:29999"/>
        <dbReference type="ChEBI" id="CHEBI:30616"/>
        <dbReference type="ChEBI" id="CHEBI:83421"/>
        <dbReference type="ChEBI" id="CHEBI:456216"/>
        <dbReference type="EC" id="2.7.11.1"/>
    </reaction>
</comment>
<comment type="catalytic activity">
    <reaction evidence="2">
        <text>L-threonyl-[protein] + ATP = O-phospho-L-threonyl-[protein] + ADP + H(+)</text>
        <dbReference type="Rhea" id="RHEA:46608"/>
        <dbReference type="Rhea" id="RHEA-COMP:11060"/>
        <dbReference type="Rhea" id="RHEA-COMP:11605"/>
        <dbReference type="ChEBI" id="CHEBI:15378"/>
        <dbReference type="ChEBI" id="CHEBI:30013"/>
        <dbReference type="ChEBI" id="CHEBI:30616"/>
        <dbReference type="ChEBI" id="CHEBI:61977"/>
        <dbReference type="ChEBI" id="CHEBI:456216"/>
        <dbReference type="EC" id="2.7.11.1"/>
    </reaction>
</comment>
<comment type="subcellular location">
    <subcellularLocation>
        <location evidence="1">Cytoplasm</location>
        <location evidence="1">Cytoskeleton</location>
        <location evidence="1">Microtubule organizing center</location>
        <location evidence="1">Centrosome</location>
    </subcellularLocation>
    <subcellularLocation>
        <location>Nucleus</location>
    </subcellularLocation>
    <text evidence="1">During interphase is mainly nuclear, upon nuclear envelope breakdown localizes at the cytoplasm and during mitosis at the centrosomes.</text>
</comment>
<comment type="PTM">
    <text evidence="1">Phosphorylation at Thr-743 by CDK1 during M phase activates its kinase activity. Maximum phosphorylation occurs in prometaphase (By similarity).</text>
</comment>
<comment type="similarity">
    <text evidence="7">Belongs to the protein kinase superfamily. AGC Ser/Thr protein kinase family.</text>
</comment>
<gene>
    <name type="primary">MASTL</name>
    <name type="synonym">GW</name>
    <name type="synonym">GWL</name>
</gene>
<feature type="chain" id="PRO_0000408316" description="Serine/threonine-protein kinase greatwall">
    <location>
        <begin position="1"/>
        <end position="881"/>
    </location>
</feature>
<feature type="domain" description="Protein kinase" evidence="3">
    <location>
        <begin position="30"/>
        <end position="837"/>
    </location>
</feature>
<feature type="domain" description="AGC-kinase C-terminal" evidence="4">
    <location>
        <begin position="838"/>
        <end position="881"/>
    </location>
</feature>
<feature type="region of interest" description="Disordered" evidence="6">
    <location>
        <begin position="1"/>
        <end position="20"/>
    </location>
</feature>
<feature type="region of interest" description="Disordered" evidence="6">
    <location>
        <begin position="310"/>
        <end position="345"/>
    </location>
</feature>
<feature type="region of interest" description="Disordered" evidence="6">
    <location>
        <begin position="706"/>
        <end position="732"/>
    </location>
</feature>
<feature type="compositionally biased region" description="Basic and acidic residues" evidence="6">
    <location>
        <begin position="312"/>
        <end position="321"/>
    </location>
</feature>
<feature type="active site" description="Proton acceptor" evidence="3 5">
    <location>
        <position position="151"/>
    </location>
</feature>
<feature type="binding site" evidence="3">
    <location>
        <begin position="36"/>
        <end position="44"/>
    </location>
    <ligand>
        <name>ATP</name>
        <dbReference type="ChEBI" id="CHEBI:30616"/>
    </ligand>
</feature>
<feature type="binding site" evidence="3">
    <location>
        <position position="57"/>
    </location>
    <ligand>
        <name>ATP</name>
        <dbReference type="ChEBI" id="CHEBI:30616"/>
    </ligand>
</feature>
<feature type="modified residue" description="Phosphothreonine; by CDK1" evidence="1">
    <location>
        <position position="743"/>
    </location>
</feature>
<accession>E1C2I2</accession>
<sequence length="881" mass="97913">MSTVEPLSDEGVAAGPRRIEVPRPPSIEEFTIVKPISRGAFGKVYLGRKAGRLYAVKVMKKADMINKNMVHQVQAERDALALSKSPFIVHLYYSLQSANNVYLVMEYLIGGDVKSLLHIYGYFDEEMAVKYISEAALALDYLHRHGIIHRDLKPDNMLISNQGHIKLTDFGLSRVTLNREINMIDILTTPSMAKPKHDYSRTPGQLLSLISSLGFYTPVGMKMPINPNSGGASDSLHEVISPLSMIEKENTPLSTKLFKTGLDTSPLTPVMPVRSLTPALLQSRERFGASTASSQSCMYLSSMESECCSSPRLEKDVKQTEDEMCSTGTSNSRPPLPSSREVLNSKDPKVLKKELESAISPISSNDCGSRQKLGTERSEITDTPVTTLDTKGIVRKCLSENKIWEEKLVARREMTNEMLETASSQQSPLFLKDPVQPVKEEEIFEKPGVKRSFELVDTSPCQELNYVKKTNAEYKRGCWISELSASKSTGLTTEIQSLMLSGEICESKEIMRCIDRQQTEKPLVPTVAKNLLCDLDADHEKDKEYMNSSLLCADDEKPLGALSADSDLSFPETSVSESHLEKQLVDLDKGVKDLSFEEPKAEDLLTMSPNCQEASRNGVEADVVQNCTMLCCEQDNHQKHTEETDTISSPSEKMTETVHLFRKNNVVFRSYNSPINVSNVSDPCSMASLDIMDLSPACSGSYPTAITPLQKTPRQGDAGTPYRTPKSVRRGAAPVEGERILGTPDYLAPELLLTKPHGSAVDWWALGVCLFEFLTGIPPFNDETPAQVFQNILKRDIPWPEGEEKLSDNAQNAIDILLTFDSTKRAGLKELKHHPLFHGVDWDNLQNQPMPFIPQPDDETDTSYFEARNNAQHLTVSGFSL</sequence>
<protein>
    <recommendedName>
        <fullName>Serine/threonine-protein kinase greatwall</fullName>
        <shortName>GW</shortName>
        <shortName>GWL</shortName>
        <ecNumber evidence="2">2.7.11.1</ecNumber>
    </recommendedName>
    <alternativeName>
        <fullName>Microtubule-associated serine/threonine-protein kinase-like</fullName>
        <shortName>MAST-L</shortName>
    </alternativeName>
</protein>
<evidence type="ECO:0000250" key="1"/>
<evidence type="ECO:0000250" key="2">
    <source>
        <dbReference type="UniProtKB" id="Q96GX5"/>
    </source>
</evidence>
<evidence type="ECO:0000255" key="3">
    <source>
        <dbReference type="PROSITE-ProRule" id="PRU00159"/>
    </source>
</evidence>
<evidence type="ECO:0000255" key="4">
    <source>
        <dbReference type="PROSITE-ProRule" id="PRU00618"/>
    </source>
</evidence>
<evidence type="ECO:0000255" key="5">
    <source>
        <dbReference type="PROSITE-ProRule" id="PRU10027"/>
    </source>
</evidence>
<evidence type="ECO:0000256" key="6">
    <source>
        <dbReference type="SAM" id="MobiDB-lite"/>
    </source>
</evidence>
<evidence type="ECO:0000305" key="7"/>